<comment type="function">
    <text evidence="1">Essential cell division protein that forms a contractile ring structure (Z ring) at the future cell division site. The regulation of the ring assembly controls the timing and the location of cell division. One of the functions of the FtsZ ring is to recruit other cell division proteins to the septum to produce a new cell wall between the dividing cells. Binds GTP and shows GTPase activity.</text>
</comment>
<comment type="subunit">
    <text evidence="1">Homodimer. Polymerizes to form a dynamic ring structure in a strictly GTP-dependent manner. Interacts directly with several other division proteins.</text>
</comment>
<comment type="subcellular location">
    <subcellularLocation>
        <location evidence="1">Cytoplasm</location>
    </subcellularLocation>
    <text evidence="1">Assembles at midcell at the inner surface of the cytoplasmic membrane.</text>
</comment>
<comment type="similarity">
    <text evidence="1">Belongs to the FtsZ family.</text>
</comment>
<comment type="sequence caution" evidence="3">
    <conflict type="erroneous initiation">
        <sequence resource="EMBL-CDS" id="AAA85622"/>
    </conflict>
</comment>
<comment type="sequence caution" evidence="3">
    <conflict type="erroneous initiation">
        <sequence resource="EMBL-CDS" id="CAA65464"/>
    </conflict>
</comment>
<comment type="sequence caution" evidence="3">
    <conflict type="erroneous initiation">
        <sequence resource="EMBL-CDS" id="CAA78156"/>
    </conflict>
</comment>
<reference key="1">
    <citation type="submission" date="1995-12" db="EMBL/GenBank/DDBJ databases">
        <authorList>
            <person name="Dunn J.J."/>
            <person name="Butler-Loffredo L."/>
            <person name="Kieleczawa J."/>
            <person name="Medalle J."/>
            <person name="Luft B.J."/>
        </authorList>
    </citation>
    <scope>NUCLEOTIDE SEQUENCE [GENOMIC DNA]</scope>
    <source>
        <strain>ATCC 35210 / DSM 4680 / CIP 102532 / B31</strain>
    </source>
</reference>
<reference key="2">
    <citation type="journal article" date="1997" name="Nature">
        <title>Genomic sequence of a Lyme disease spirochaete, Borrelia burgdorferi.</title>
        <authorList>
            <person name="Fraser C.M."/>
            <person name="Casjens S."/>
            <person name="Huang W.M."/>
            <person name="Sutton G.G."/>
            <person name="Clayton R.A."/>
            <person name="Lathigra R."/>
            <person name="White O."/>
            <person name="Ketchum K.A."/>
            <person name="Dodson R.J."/>
            <person name="Hickey E.K."/>
            <person name="Gwinn M.L."/>
            <person name="Dougherty B.A."/>
            <person name="Tomb J.-F."/>
            <person name="Fleischmann R.D."/>
            <person name="Richardson D.L."/>
            <person name="Peterson J.D."/>
            <person name="Kerlavage A.R."/>
            <person name="Quackenbush J."/>
            <person name="Salzberg S.L."/>
            <person name="Hanson M."/>
            <person name="van Vugt R."/>
            <person name="Palmer N."/>
            <person name="Adams M.D."/>
            <person name="Gocayne J.D."/>
            <person name="Weidman J.F."/>
            <person name="Utterback T.R."/>
            <person name="Watthey L."/>
            <person name="McDonald L.A."/>
            <person name="Artiach P."/>
            <person name="Bowman C."/>
            <person name="Garland S.A."/>
            <person name="Fujii C."/>
            <person name="Cotton M.D."/>
            <person name="Horst K."/>
            <person name="Roberts K.M."/>
            <person name="Hatch B."/>
            <person name="Smith H.O."/>
            <person name="Venter J.C."/>
        </authorList>
    </citation>
    <scope>NUCLEOTIDE SEQUENCE [LARGE SCALE GENOMIC DNA]</scope>
    <source>
        <strain>ATCC 35210 / DSM 4680 / CIP 102532 / B31</strain>
    </source>
</reference>
<reference key="3">
    <citation type="submission" date="1996-02" db="EMBL/GenBank/DDBJ databases">
        <authorList>
            <person name="Ge Y."/>
            <person name="Old I.G."/>
            <person name="Saint-Girons I."/>
            <person name="Charon N.W."/>
        </authorList>
    </citation>
    <scope>NUCLEOTIDE SEQUENCE [GENOMIC DNA]</scope>
    <source>
        <strain>212</strain>
    </source>
</reference>
<reference key="4">
    <citation type="journal article" date="1992" name="FEMS Microbiol. Lett.">
        <title>Mapping of genes on the linear chromosome of the bacterium Borrelia burgdorferi: possible locations for its origin of replication.</title>
        <authorList>
            <person name="Old I.G."/>
            <person name="Macdougall J.H."/>
            <person name="Saint-Girons I."/>
            <person name="Davidson B.E."/>
        </authorList>
    </citation>
    <scope>NUCLEOTIDE SEQUENCE [GENOMIC DNA] OF 29-115</scope>
    <source>
        <strain>212</strain>
    </source>
</reference>
<reference key="5">
    <citation type="submission" date="1992-06" db="EMBL/GenBank/DDBJ databases">
        <authorList>
            <person name="Old I.G."/>
        </authorList>
    </citation>
    <scope>NUCLEOTIDE SEQUENCE [GENOMIC DNA] OF 1-115</scope>
    <source>
        <strain>212</strain>
    </source>
</reference>
<dbReference type="EMBL" id="U43739">
    <property type="protein sequence ID" value="AAA85622.1"/>
    <property type="status" value="ALT_INIT"/>
    <property type="molecule type" value="Genomic_DNA"/>
</dbReference>
<dbReference type="EMBL" id="AE000783">
    <property type="protein sequence ID" value="AAC66649.2"/>
    <property type="molecule type" value="Genomic_DNA"/>
</dbReference>
<dbReference type="EMBL" id="X96685">
    <property type="protein sequence ID" value="CAA65464.1"/>
    <property type="status" value="ALT_INIT"/>
    <property type="molecule type" value="Genomic_DNA"/>
</dbReference>
<dbReference type="EMBL" id="L76303">
    <property type="protein sequence ID" value="AAB51402.1"/>
    <property type="molecule type" value="Genomic_DNA"/>
</dbReference>
<dbReference type="EMBL" id="Z12164">
    <property type="protein sequence ID" value="CAA78156.1"/>
    <property type="status" value="ALT_INIT"/>
    <property type="molecule type" value="Genomic_DNA"/>
</dbReference>
<dbReference type="PIR" id="C70137">
    <property type="entry name" value="C70137"/>
</dbReference>
<dbReference type="RefSeq" id="NP_212433.2">
    <property type="nucleotide sequence ID" value="NC_001318.1"/>
</dbReference>
<dbReference type="RefSeq" id="WP_002656388.1">
    <property type="nucleotide sequence ID" value="NC_001318.1"/>
</dbReference>
<dbReference type="SMR" id="P45483"/>
<dbReference type="STRING" id="224326.BB_0299"/>
<dbReference type="PaxDb" id="224326-BB_0299"/>
<dbReference type="EnsemblBacteria" id="AAC66649">
    <property type="protein sequence ID" value="AAC66649"/>
    <property type="gene ID" value="BB_0299"/>
</dbReference>
<dbReference type="KEGG" id="bbu:BB_0299"/>
<dbReference type="PATRIC" id="fig|224326.49.peg.698"/>
<dbReference type="HOGENOM" id="CLU_024865_0_1_12"/>
<dbReference type="OrthoDB" id="9813375at2"/>
<dbReference type="Proteomes" id="UP000001807">
    <property type="component" value="Chromosome"/>
</dbReference>
<dbReference type="GO" id="GO:0032153">
    <property type="term" value="C:cell division site"/>
    <property type="evidence" value="ECO:0007669"/>
    <property type="project" value="UniProtKB-UniRule"/>
</dbReference>
<dbReference type="GO" id="GO:0005737">
    <property type="term" value="C:cytoplasm"/>
    <property type="evidence" value="ECO:0007669"/>
    <property type="project" value="UniProtKB-SubCell"/>
</dbReference>
<dbReference type="GO" id="GO:0005525">
    <property type="term" value="F:GTP binding"/>
    <property type="evidence" value="ECO:0007669"/>
    <property type="project" value="UniProtKB-UniRule"/>
</dbReference>
<dbReference type="GO" id="GO:0003924">
    <property type="term" value="F:GTPase activity"/>
    <property type="evidence" value="ECO:0007669"/>
    <property type="project" value="UniProtKB-UniRule"/>
</dbReference>
<dbReference type="GO" id="GO:0000917">
    <property type="term" value="P:division septum assembly"/>
    <property type="evidence" value="ECO:0007669"/>
    <property type="project" value="UniProtKB-KW"/>
</dbReference>
<dbReference type="GO" id="GO:0043093">
    <property type="term" value="P:FtsZ-dependent cytokinesis"/>
    <property type="evidence" value="ECO:0007669"/>
    <property type="project" value="UniProtKB-UniRule"/>
</dbReference>
<dbReference type="GO" id="GO:0051258">
    <property type="term" value="P:protein polymerization"/>
    <property type="evidence" value="ECO:0007669"/>
    <property type="project" value="UniProtKB-UniRule"/>
</dbReference>
<dbReference type="CDD" id="cd02201">
    <property type="entry name" value="FtsZ_type1"/>
    <property type="match status" value="1"/>
</dbReference>
<dbReference type="FunFam" id="3.40.50.1440:FF:000001">
    <property type="entry name" value="Cell division protein FtsZ"/>
    <property type="match status" value="1"/>
</dbReference>
<dbReference type="Gene3D" id="3.30.1330.20">
    <property type="entry name" value="Tubulin/FtsZ, C-terminal domain"/>
    <property type="match status" value="1"/>
</dbReference>
<dbReference type="Gene3D" id="3.40.50.1440">
    <property type="entry name" value="Tubulin/FtsZ, GTPase domain"/>
    <property type="match status" value="1"/>
</dbReference>
<dbReference type="HAMAP" id="MF_00909">
    <property type="entry name" value="FtsZ"/>
    <property type="match status" value="1"/>
</dbReference>
<dbReference type="InterPro" id="IPR000158">
    <property type="entry name" value="Cell_div_FtsZ"/>
</dbReference>
<dbReference type="InterPro" id="IPR020805">
    <property type="entry name" value="Cell_div_FtsZ_CS"/>
</dbReference>
<dbReference type="InterPro" id="IPR045061">
    <property type="entry name" value="FtsZ/CetZ"/>
</dbReference>
<dbReference type="InterPro" id="IPR024757">
    <property type="entry name" value="FtsZ_C"/>
</dbReference>
<dbReference type="InterPro" id="IPR008280">
    <property type="entry name" value="Tub_FtsZ_C"/>
</dbReference>
<dbReference type="InterPro" id="IPR037103">
    <property type="entry name" value="Tubulin/FtsZ-like_C"/>
</dbReference>
<dbReference type="InterPro" id="IPR018316">
    <property type="entry name" value="Tubulin/FtsZ_2-layer-sand-dom"/>
</dbReference>
<dbReference type="InterPro" id="IPR036525">
    <property type="entry name" value="Tubulin/FtsZ_GTPase_sf"/>
</dbReference>
<dbReference type="InterPro" id="IPR003008">
    <property type="entry name" value="Tubulin_FtsZ_GTPase"/>
</dbReference>
<dbReference type="NCBIfam" id="TIGR00065">
    <property type="entry name" value="ftsZ"/>
    <property type="match status" value="1"/>
</dbReference>
<dbReference type="PANTHER" id="PTHR30314">
    <property type="entry name" value="CELL DIVISION PROTEIN FTSZ-RELATED"/>
    <property type="match status" value="1"/>
</dbReference>
<dbReference type="PANTHER" id="PTHR30314:SF3">
    <property type="entry name" value="MITOCHONDRIAL DIVISION PROTEIN FSZA"/>
    <property type="match status" value="1"/>
</dbReference>
<dbReference type="Pfam" id="PF12327">
    <property type="entry name" value="FtsZ_C"/>
    <property type="match status" value="1"/>
</dbReference>
<dbReference type="Pfam" id="PF00091">
    <property type="entry name" value="Tubulin"/>
    <property type="match status" value="1"/>
</dbReference>
<dbReference type="PRINTS" id="PR00423">
    <property type="entry name" value="CELLDVISFTSZ"/>
</dbReference>
<dbReference type="SMART" id="SM00864">
    <property type="entry name" value="Tubulin"/>
    <property type="match status" value="1"/>
</dbReference>
<dbReference type="SMART" id="SM00865">
    <property type="entry name" value="Tubulin_C"/>
    <property type="match status" value="1"/>
</dbReference>
<dbReference type="SUPFAM" id="SSF55307">
    <property type="entry name" value="Tubulin C-terminal domain-like"/>
    <property type="match status" value="1"/>
</dbReference>
<dbReference type="SUPFAM" id="SSF52490">
    <property type="entry name" value="Tubulin nucleotide-binding domain-like"/>
    <property type="match status" value="1"/>
</dbReference>
<dbReference type="PROSITE" id="PS01134">
    <property type="entry name" value="FTSZ_1"/>
    <property type="match status" value="1"/>
</dbReference>
<dbReference type="PROSITE" id="PS01135">
    <property type="entry name" value="FTSZ_2"/>
    <property type="match status" value="1"/>
</dbReference>
<proteinExistence type="inferred from homology"/>
<gene>
    <name evidence="1" type="primary">ftsZ</name>
    <name type="ordered locus">BB_0299</name>
</gene>
<evidence type="ECO:0000255" key="1">
    <source>
        <dbReference type="HAMAP-Rule" id="MF_00909"/>
    </source>
</evidence>
<evidence type="ECO:0000256" key="2">
    <source>
        <dbReference type="SAM" id="MobiDB-lite"/>
    </source>
</evidence>
<evidence type="ECO:0000305" key="3"/>
<name>FTSZ_BORBU</name>
<sequence>MKDYNMIDSHTRRFDSTTNPTILKVIGAGGGGSNAVNRMIEYGVRDVEFIVANTDLQALQTSIAPIKIALGAKVTAGLGAGGKPEIGQAAAEEDIDVIRNHLSGADMVFITAGMGGGTGTGAAPVIAQVAKELGILTVGVVTKPFKFEGPKKLRLAEQGINNLRKSVDTLIIIPNQKLLTVVDKRTTIKDAFKRADDVLRMGVQGIAGLIIEHGEVNIDFADVKSIMQGQGDALMGIGYGKGENRAVDAATSAISNPLLEEVRIEGSKGLLVNVTGGDDFSLLELEEIMGIITVSVDDEATVIYGHAINSNLEDEIYVTVVATGFASKKQKEISSTPENNTLSSKEFDTLMSGNQNAPSGSYEQQDSSFAAKSKNVNYFDDDIDVPTFLRNLNKKSSDD</sequence>
<keyword id="KW-0131">Cell cycle</keyword>
<keyword id="KW-0132">Cell division</keyword>
<keyword id="KW-0963">Cytoplasm</keyword>
<keyword id="KW-0342">GTP-binding</keyword>
<keyword id="KW-0547">Nucleotide-binding</keyword>
<keyword id="KW-1185">Reference proteome</keyword>
<keyword id="KW-0717">Septation</keyword>
<accession>P45483</accession>
<accession>Q59183</accession>
<feature type="chain" id="PRO_0000114343" description="Cell division protein FtsZ">
    <location>
        <begin position="1"/>
        <end position="399"/>
    </location>
</feature>
<feature type="region of interest" description="Disordered" evidence="2">
    <location>
        <begin position="349"/>
        <end position="368"/>
    </location>
</feature>
<feature type="compositionally biased region" description="Polar residues" evidence="2">
    <location>
        <begin position="351"/>
        <end position="368"/>
    </location>
</feature>
<feature type="binding site" evidence="1">
    <location>
        <begin position="30"/>
        <end position="34"/>
    </location>
    <ligand>
        <name>GTP</name>
        <dbReference type="ChEBI" id="CHEBI:37565"/>
    </ligand>
</feature>
<feature type="binding site" evidence="1">
    <location>
        <begin position="117"/>
        <end position="119"/>
    </location>
    <ligand>
        <name>GTP</name>
        <dbReference type="ChEBI" id="CHEBI:37565"/>
    </ligand>
</feature>
<feature type="binding site" evidence="1">
    <location>
        <position position="148"/>
    </location>
    <ligand>
        <name>GTP</name>
        <dbReference type="ChEBI" id="CHEBI:37565"/>
    </ligand>
</feature>
<feature type="binding site" evidence="1">
    <location>
        <position position="152"/>
    </location>
    <ligand>
        <name>GTP</name>
        <dbReference type="ChEBI" id="CHEBI:37565"/>
    </ligand>
</feature>
<feature type="binding site" evidence="1">
    <location>
        <position position="196"/>
    </location>
    <ligand>
        <name>GTP</name>
        <dbReference type="ChEBI" id="CHEBI:37565"/>
    </ligand>
</feature>
<feature type="sequence conflict" description="In Ref. 4 and 5." evidence="3" ref="4 5">
    <original>G</original>
    <variation>A</variation>
    <location>
        <position position="115"/>
    </location>
</feature>
<feature type="sequence conflict" description="In Ref. 3; CAA65464/AAB51402." evidence="3" ref="3">
    <original>AA</original>
    <variation>RR</variation>
    <location>
        <begin position="249"/>
        <end position="250"/>
    </location>
</feature>
<feature type="sequence conflict" description="In Ref. 3; CAA65464/AAB51402." evidence="3" ref="3">
    <original>T</original>
    <variation>A</variation>
    <location>
        <position position="336"/>
    </location>
</feature>
<organism>
    <name type="scientific">Borreliella burgdorferi (strain ATCC 35210 / DSM 4680 / CIP 102532 / B31)</name>
    <name type="common">Borrelia burgdorferi</name>
    <dbReference type="NCBI Taxonomy" id="224326"/>
    <lineage>
        <taxon>Bacteria</taxon>
        <taxon>Pseudomonadati</taxon>
        <taxon>Spirochaetota</taxon>
        <taxon>Spirochaetia</taxon>
        <taxon>Spirochaetales</taxon>
        <taxon>Borreliaceae</taxon>
        <taxon>Borreliella</taxon>
    </lineage>
</organism>
<protein>
    <recommendedName>
        <fullName evidence="1">Cell division protein FtsZ</fullName>
    </recommendedName>
</protein>